<gene>
    <name evidence="1" type="primary">trpC</name>
    <name type="ordered locus">TGRD_119</name>
</gene>
<feature type="chain" id="PRO_1000095906" description="Indole-3-glycerol phosphate synthase">
    <location>
        <begin position="1"/>
        <end position="258"/>
    </location>
</feature>
<comment type="catalytic activity">
    <reaction evidence="1">
        <text>1-(2-carboxyphenylamino)-1-deoxy-D-ribulose 5-phosphate + H(+) = (1S,2R)-1-C-(indol-3-yl)glycerol 3-phosphate + CO2 + H2O</text>
        <dbReference type="Rhea" id="RHEA:23476"/>
        <dbReference type="ChEBI" id="CHEBI:15377"/>
        <dbReference type="ChEBI" id="CHEBI:15378"/>
        <dbReference type="ChEBI" id="CHEBI:16526"/>
        <dbReference type="ChEBI" id="CHEBI:58613"/>
        <dbReference type="ChEBI" id="CHEBI:58866"/>
        <dbReference type="EC" id="4.1.1.48"/>
    </reaction>
</comment>
<comment type="pathway">
    <text evidence="1">Amino-acid biosynthesis; L-tryptophan biosynthesis; L-tryptophan from chorismate: step 4/5.</text>
</comment>
<comment type="similarity">
    <text evidence="1">Belongs to the TrpC family.</text>
</comment>
<evidence type="ECO:0000255" key="1">
    <source>
        <dbReference type="HAMAP-Rule" id="MF_00134"/>
    </source>
</evidence>
<keyword id="KW-0028">Amino-acid biosynthesis</keyword>
<keyword id="KW-0057">Aromatic amino acid biosynthesis</keyword>
<keyword id="KW-0210">Decarboxylase</keyword>
<keyword id="KW-0456">Lyase</keyword>
<keyword id="KW-0822">Tryptophan biosynthesis</keyword>
<organism>
    <name type="scientific">Endomicrobium trichonymphae</name>
    <dbReference type="NCBI Taxonomy" id="1408204"/>
    <lineage>
        <taxon>Bacteria</taxon>
        <taxon>Pseudomonadati</taxon>
        <taxon>Elusimicrobiota</taxon>
        <taxon>Endomicrobiia</taxon>
        <taxon>Endomicrobiales</taxon>
        <taxon>Endomicrobiaceae</taxon>
        <taxon>Candidatus Endomicrobiellum</taxon>
    </lineage>
</organism>
<dbReference type="EC" id="4.1.1.48" evidence="1"/>
<dbReference type="EMBL" id="AP009510">
    <property type="protein sequence ID" value="BAG13602.1"/>
    <property type="molecule type" value="Genomic_DNA"/>
</dbReference>
<dbReference type="RefSeq" id="WP_015423131.1">
    <property type="nucleotide sequence ID" value="NC_020419.1"/>
</dbReference>
<dbReference type="SMR" id="B1GZC0"/>
<dbReference type="STRING" id="471821.TGRD_119"/>
<dbReference type="KEGG" id="eti:RSTT_104"/>
<dbReference type="KEGG" id="rsd:TGRD_119"/>
<dbReference type="PATRIC" id="fig|471821.5.peg.168"/>
<dbReference type="HOGENOM" id="CLU_034247_2_0_0"/>
<dbReference type="OrthoDB" id="9804217at2"/>
<dbReference type="UniPathway" id="UPA00035">
    <property type="reaction ID" value="UER00043"/>
</dbReference>
<dbReference type="Proteomes" id="UP000001691">
    <property type="component" value="Chromosome"/>
</dbReference>
<dbReference type="GO" id="GO:0004425">
    <property type="term" value="F:indole-3-glycerol-phosphate synthase activity"/>
    <property type="evidence" value="ECO:0007669"/>
    <property type="project" value="UniProtKB-UniRule"/>
</dbReference>
<dbReference type="GO" id="GO:0004640">
    <property type="term" value="F:phosphoribosylanthranilate isomerase activity"/>
    <property type="evidence" value="ECO:0007669"/>
    <property type="project" value="TreeGrafter"/>
</dbReference>
<dbReference type="GO" id="GO:0000162">
    <property type="term" value="P:L-tryptophan biosynthetic process"/>
    <property type="evidence" value="ECO:0007669"/>
    <property type="project" value="UniProtKB-UniRule"/>
</dbReference>
<dbReference type="CDD" id="cd00331">
    <property type="entry name" value="IGPS"/>
    <property type="match status" value="1"/>
</dbReference>
<dbReference type="FunFam" id="3.20.20.70:FF:000024">
    <property type="entry name" value="Indole-3-glycerol phosphate synthase"/>
    <property type="match status" value="1"/>
</dbReference>
<dbReference type="Gene3D" id="3.20.20.70">
    <property type="entry name" value="Aldolase class I"/>
    <property type="match status" value="1"/>
</dbReference>
<dbReference type="HAMAP" id="MF_00134_B">
    <property type="entry name" value="IGPS_B"/>
    <property type="match status" value="1"/>
</dbReference>
<dbReference type="InterPro" id="IPR013785">
    <property type="entry name" value="Aldolase_TIM"/>
</dbReference>
<dbReference type="InterPro" id="IPR045186">
    <property type="entry name" value="Indole-3-glycerol_P_synth"/>
</dbReference>
<dbReference type="InterPro" id="IPR013798">
    <property type="entry name" value="Indole-3-glycerol_P_synth_dom"/>
</dbReference>
<dbReference type="InterPro" id="IPR001468">
    <property type="entry name" value="Indole-3-GlycerolPSynthase_CS"/>
</dbReference>
<dbReference type="InterPro" id="IPR011060">
    <property type="entry name" value="RibuloseP-bd_barrel"/>
</dbReference>
<dbReference type="NCBIfam" id="NF001377">
    <property type="entry name" value="PRK00278.2-4"/>
    <property type="match status" value="1"/>
</dbReference>
<dbReference type="PANTHER" id="PTHR22854:SF2">
    <property type="entry name" value="INDOLE-3-GLYCEROL-PHOSPHATE SYNTHASE"/>
    <property type="match status" value="1"/>
</dbReference>
<dbReference type="PANTHER" id="PTHR22854">
    <property type="entry name" value="TRYPTOPHAN BIOSYNTHESIS PROTEIN"/>
    <property type="match status" value="1"/>
</dbReference>
<dbReference type="Pfam" id="PF00218">
    <property type="entry name" value="IGPS"/>
    <property type="match status" value="1"/>
</dbReference>
<dbReference type="SUPFAM" id="SSF51366">
    <property type="entry name" value="Ribulose-phoshate binding barrel"/>
    <property type="match status" value="1"/>
</dbReference>
<dbReference type="PROSITE" id="PS00614">
    <property type="entry name" value="IGPS"/>
    <property type="match status" value="1"/>
</dbReference>
<proteinExistence type="inferred from homology"/>
<reference key="1">
    <citation type="journal article" date="2008" name="Proc. Natl. Acad. Sci. U.S.A.">
        <title>Complete genome of the uncultured termite group 1 bacteria in a single host protist cell.</title>
        <authorList>
            <person name="Hongoh Y."/>
            <person name="Sharma V.K."/>
            <person name="Prakash T."/>
            <person name="Noda S."/>
            <person name="Taylor T.D."/>
            <person name="Kudo T."/>
            <person name="Sakaki Y."/>
            <person name="Toyoda A."/>
            <person name="Hattori M."/>
            <person name="Ohkuma M."/>
        </authorList>
    </citation>
    <scope>NUCLEOTIDE SEQUENCE [LARGE SCALE GENOMIC DNA]</scope>
</reference>
<name>TRPC_ENDTX</name>
<sequence length="258" mass="28831">MILDKIVAATKVRVEKAKLQKSFKTAKREALLNKKKNFVSFKKALSKAGINFICEVKKASPSKGLISTDFKYKEIALEYEKTGAAAISVLTEPNFFLGSIRYLQEIKSIVKIPVLRKDFIIDSYQIYESRVIGADAVLLICAVLSYDVLKEFLETAQGLGMSCLVEAHNEEEIETALKAGAEIIGVNNRNLRTFEVDFGNSMKLRRLVPVDKIFVSESGIKTKKHIDILKANDVNAVLIGEELMKSGNIAERLRELKD</sequence>
<protein>
    <recommendedName>
        <fullName evidence="1">Indole-3-glycerol phosphate synthase</fullName>
        <shortName evidence="1">IGPS</shortName>
        <ecNumber evidence="1">4.1.1.48</ecNumber>
    </recommendedName>
</protein>
<accession>B1GZC0</accession>